<proteinExistence type="inferred from homology"/>
<name>ANGI_RHIRO</name>
<reference key="1">
    <citation type="journal article" date="2003" name="Gene">
        <title>Pseudogenization of the tumor-growth promoter angiogenin in a leaf-eating monkey.</title>
        <authorList>
            <person name="Zhang J."/>
            <person name="Zhang Y.-P."/>
        </authorList>
    </citation>
    <scope>NUCLEOTIDE SEQUENCE [GENOMIC DNA]</scope>
</reference>
<feature type="signal peptide" evidence="1">
    <location>
        <begin position="1"/>
        <end position="24"/>
    </location>
</feature>
<feature type="chain" id="PRO_0000030850" description="Angiogenin">
    <location>
        <begin position="25"/>
        <end position="146"/>
    </location>
</feature>
<feature type="short sequence motif" description="Nucleolar localization signal" evidence="1">
    <location>
        <begin position="55"/>
        <end position="59"/>
    </location>
</feature>
<feature type="active site" description="Proton acceptor" evidence="1">
    <location>
        <position position="37"/>
    </location>
</feature>
<feature type="active site" description="Proton donor" evidence="1">
    <location>
        <position position="138"/>
    </location>
</feature>
<feature type="binding site" evidence="1">
    <location>
        <position position="45"/>
    </location>
    <ligand>
        <name>tRNA</name>
        <dbReference type="ChEBI" id="CHEBI:17843"/>
    </ligand>
</feature>
<feature type="binding site" evidence="1">
    <location>
        <position position="105"/>
    </location>
    <ligand>
        <name>tRNA</name>
        <dbReference type="ChEBI" id="CHEBI:17843"/>
    </ligand>
</feature>
<feature type="binding site" evidence="1">
    <location>
        <position position="127"/>
    </location>
    <ligand>
        <name>tRNA</name>
        <dbReference type="ChEBI" id="CHEBI:17843"/>
    </ligand>
</feature>
<feature type="modified residue" description="Pyrrolidone carboxylic acid" evidence="1">
    <location>
        <position position="25"/>
    </location>
</feature>
<feature type="disulfide bond" evidence="1">
    <location>
        <begin position="50"/>
        <end position="105"/>
    </location>
</feature>
<feature type="disulfide bond" evidence="1">
    <location>
        <begin position="63"/>
        <end position="116"/>
    </location>
</feature>
<feature type="disulfide bond" evidence="1">
    <location>
        <begin position="81"/>
        <end position="131"/>
    </location>
</feature>
<accession>Q861Y3</accession>
<gene>
    <name type="primary">ANG</name>
    <name type="synonym">RNASE5</name>
</gene>
<comment type="function">
    <text evidence="1 2">Secreted ribonuclease that can either promote or restrict cell proliferation of target cells, depending on the context. Endocytosed in target cells via its receptor PLXNB2 and translocates to the cytoplasm or nucleus. Under stress conditions, localizes to the cytoplasm and promotes the assembly of stress granules (SGs): specifically cleaves a subset of tRNAs within anticodon loops to produce tRNA-derived stress-induced fragments (tiRNAs), resulting in translation repression and inhibition of cell proliferation (By similarity). tiRNas also prevent formation of apoptosome, thereby promoting cell survival (By similarity). Preferentially cleaves RNAs between a pyrimidine and an adenosine residue, suggesting that it cleaves the anticodon loop of tRNA(Ala) (32-UUAGCAU-38) after positions 33 and 36. Cleaves a subset of tRNAs, including tRNA(Ala), tRNA(Glu), tRNA(Gly), tRNA(Lys), tRNA(Val), tRNA(His), tRNA(Asp) and tRNA(Sec). Under growth conditions and in differentiated cells, translocates to the nucleus and stimulates ribosomal RNA (rRNA) transcription, including that containing the initiation site sequences of 45S rRNA, thereby promoting cell growth and proliferation. Angiogenin induces vascularization of normal and malignant tissues via its ability to promote rRNA transcription. Involved in hematopoietic stem and progenitor cell (HSPC) growth and survival by promoting rRNA transcription in growth conditions and inhibiting translation in response to stress, respectively. Mediates the crosstalk between myeloid and intestinal epithelial cells to protect the intestinal epithelial barrier integrity: secreted by myeloid cells and promotes intestinal epithelial cells proliferation and survival (By similarity). Also mediates osteoclast-endothelial cell crosstalk in growing bone: produced by osteoclasts and protects the neighboring vascular cells against senescence by promoting rRNA transcription (By similarity).</text>
</comment>
<comment type="activity regulation">
    <text evidence="1">Has weak tRNA ribonuclease activity by itself due to partial autoinhibition by its C-terminus, which folds into a short alpha-helix that partially occludes the substrate-binding site. In absence of stress, the ribonuclease activity is inhibited by RNH1 in the cytoplasm. In response to stress, dissociates from RNH1 in the cytoplasm and associates with cytoplasmic ribosomes with vacant A-sites: ribosomes directly activate the tRNA ribonuclease activity of ANG by refolding the C-terminal alpha-helix. In response to stress, the angiogenic activity of ANG is inhibited by RNH1 in the nucleus.</text>
</comment>
<comment type="subunit">
    <text evidence="1">Homodimer. Interacts with RNH1; inhibiting ANG ribonuclease activity. Interacts with PCNA.</text>
</comment>
<comment type="subcellular location">
    <subcellularLocation>
        <location evidence="1">Secreted</location>
    </subcellularLocation>
    <subcellularLocation>
        <location evidence="1">Nucleus</location>
    </subcellularLocation>
    <subcellularLocation>
        <location evidence="1">Nucleus</location>
        <location evidence="1">Nucleolus</location>
    </subcellularLocation>
    <subcellularLocation>
        <location evidence="1">Cytoplasm</location>
        <location evidence="1">Stress granule</location>
    </subcellularLocation>
    <text evidence="1">The secreted protein is rapidly endocytosed by target cells following interaction with PLXNB2 receptor and translocated to the cytoplasm and nucleus. In the nucleus, accumulates in the nucleolus and binds to DNA.</text>
</comment>
<comment type="similarity">
    <text evidence="3">Belongs to the pancreatic ribonuclease family.</text>
</comment>
<dbReference type="EC" id="3.1.27.-" evidence="1"/>
<dbReference type="EMBL" id="AY221130">
    <property type="protein sequence ID" value="AAO41337.1"/>
    <property type="molecule type" value="Genomic_DNA"/>
</dbReference>
<dbReference type="SMR" id="Q861Y3"/>
<dbReference type="Proteomes" id="UP000233200">
    <property type="component" value="Whole Genome Shotgun Assembly"/>
</dbReference>
<dbReference type="GO" id="GO:0032311">
    <property type="term" value="C:angiogenin-PRI complex"/>
    <property type="evidence" value="ECO:0000250"/>
    <property type="project" value="UniProtKB"/>
</dbReference>
<dbReference type="GO" id="GO:0005604">
    <property type="term" value="C:basement membrane"/>
    <property type="evidence" value="ECO:0000250"/>
    <property type="project" value="UniProtKB"/>
</dbReference>
<dbReference type="GO" id="GO:0005737">
    <property type="term" value="C:cytoplasm"/>
    <property type="evidence" value="ECO:0000250"/>
    <property type="project" value="UniProtKB"/>
</dbReference>
<dbReference type="GO" id="GO:0010494">
    <property type="term" value="C:cytoplasmic stress granule"/>
    <property type="evidence" value="ECO:0007669"/>
    <property type="project" value="UniProtKB-SubCell"/>
</dbReference>
<dbReference type="GO" id="GO:0030139">
    <property type="term" value="C:endocytic vesicle"/>
    <property type="evidence" value="ECO:0000250"/>
    <property type="project" value="UniProtKB"/>
</dbReference>
<dbReference type="GO" id="GO:0005615">
    <property type="term" value="C:extracellular space"/>
    <property type="evidence" value="ECO:0000250"/>
    <property type="project" value="UniProtKB"/>
</dbReference>
<dbReference type="GO" id="GO:0005730">
    <property type="term" value="C:nucleolus"/>
    <property type="evidence" value="ECO:0000250"/>
    <property type="project" value="UniProtKB"/>
</dbReference>
<dbReference type="GO" id="GO:0005634">
    <property type="term" value="C:nucleus"/>
    <property type="evidence" value="ECO:0000250"/>
    <property type="project" value="UniProtKB"/>
</dbReference>
<dbReference type="GO" id="GO:0003779">
    <property type="term" value="F:actin binding"/>
    <property type="evidence" value="ECO:0000250"/>
    <property type="project" value="UniProtKB"/>
</dbReference>
<dbReference type="GO" id="GO:0005507">
    <property type="term" value="F:copper ion binding"/>
    <property type="evidence" value="ECO:0000250"/>
    <property type="project" value="UniProtKB"/>
</dbReference>
<dbReference type="GO" id="GO:0003677">
    <property type="term" value="F:DNA binding"/>
    <property type="evidence" value="ECO:0007669"/>
    <property type="project" value="UniProtKB-KW"/>
</dbReference>
<dbReference type="GO" id="GO:0004519">
    <property type="term" value="F:endonuclease activity"/>
    <property type="evidence" value="ECO:0007669"/>
    <property type="project" value="UniProtKB-KW"/>
</dbReference>
<dbReference type="GO" id="GO:0008201">
    <property type="term" value="F:heparin binding"/>
    <property type="evidence" value="ECO:0000250"/>
    <property type="project" value="UniProtKB"/>
</dbReference>
<dbReference type="GO" id="GO:0042803">
    <property type="term" value="F:protein homodimerization activity"/>
    <property type="evidence" value="ECO:0000250"/>
    <property type="project" value="UniProtKB"/>
</dbReference>
<dbReference type="GO" id="GO:0004540">
    <property type="term" value="F:RNA nuclease activity"/>
    <property type="evidence" value="ECO:0000250"/>
    <property type="project" value="UniProtKB"/>
</dbReference>
<dbReference type="GO" id="GO:0005102">
    <property type="term" value="F:signaling receptor binding"/>
    <property type="evidence" value="ECO:0000250"/>
    <property type="project" value="UniProtKB"/>
</dbReference>
<dbReference type="GO" id="GO:0004549">
    <property type="term" value="F:tRNA-specific ribonuclease activity"/>
    <property type="evidence" value="ECO:0000250"/>
    <property type="project" value="UniProtKB"/>
</dbReference>
<dbReference type="GO" id="GO:0030041">
    <property type="term" value="P:actin filament polymerization"/>
    <property type="evidence" value="ECO:0000250"/>
    <property type="project" value="UniProtKB"/>
</dbReference>
<dbReference type="GO" id="GO:0001525">
    <property type="term" value="P:angiogenesis"/>
    <property type="evidence" value="ECO:0000250"/>
    <property type="project" value="UniProtKB"/>
</dbReference>
<dbReference type="GO" id="GO:0019731">
    <property type="term" value="P:antibacterial humoral response"/>
    <property type="evidence" value="ECO:0007669"/>
    <property type="project" value="TreeGrafter"/>
</dbReference>
<dbReference type="GO" id="GO:0061844">
    <property type="term" value="P:antimicrobial humoral immune response mediated by antimicrobial peptide"/>
    <property type="evidence" value="ECO:0007669"/>
    <property type="project" value="TreeGrafter"/>
</dbReference>
<dbReference type="GO" id="GO:0050830">
    <property type="term" value="P:defense response to Gram-positive bacterium"/>
    <property type="evidence" value="ECO:0007669"/>
    <property type="project" value="TreeGrafter"/>
</dbReference>
<dbReference type="GO" id="GO:0071425">
    <property type="term" value="P:hematopoietic stem cell proliferation"/>
    <property type="evidence" value="ECO:0000250"/>
    <property type="project" value="UniProtKB"/>
</dbReference>
<dbReference type="GO" id="GO:0045087">
    <property type="term" value="P:innate immune response"/>
    <property type="evidence" value="ECO:0007669"/>
    <property type="project" value="TreeGrafter"/>
</dbReference>
<dbReference type="GO" id="GO:0043066">
    <property type="term" value="P:negative regulation of apoptotic process"/>
    <property type="evidence" value="ECO:0000250"/>
    <property type="project" value="UniProtKB"/>
</dbReference>
<dbReference type="GO" id="GO:0048662">
    <property type="term" value="P:negative regulation of smooth muscle cell proliferation"/>
    <property type="evidence" value="ECO:0000250"/>
    <property type="project" value="UniProtKB"/>
</dbReference>
<dbReference type="GO" id="GO:0032055">
    <property type="term" value="P:negative regulation of translation in response to stress"/>
    <property type="evidence" value="ECO:0000250"/>
    <property type="project" value="UniProtKB"/>
</dbReference>
<dbReference type="GO" id="GO:0001938">
    <property type="term" value="P:positive regulation of endothelial cell proliferation"/>
    <property type="evidence" value="ECO:0000250"/>
    <property type="project" value="UniProtKB"/>
</dbReference>
<dbReference type="GO" id="GO:0050714">
    <property type="term" value="P:positive regulation of protein secretion"/>
    <property type="evidence" value="ECO:0000250"/>
    <property type="project" value="UniProtKB"/>
</dbReference>
<dbReference type="GO" id="GO:0001666">
    <property type="term" value="P:response to hypoxia"/>
    <property type="evidence" value="ECO:0000250"/>
    <property type="project" value="UniProtKB"/>
</dbReference>
<dbReference type="GO" id="GO:0009303">
    <property type="term" value="P:rRNA transcription"/>
    <property type="evidence" value="ECO:0000250"/>
    <property type="project" value="UniProtKB"/>
</dbReference>
<dbReference type="GO" id="GO:0023052">
    <property type="term" value="P:signaling"/>
    <property type="evidence" value="ECO:0000250"/>
    <property type="project" value="UniProtKB"/>
</dbReference>
<dbReference type="GO" id="GO:0034063">
    <property type="term" value="P:stress granule assembly"/>
    <property type="evidence" value="ECO:0000250"/>
    <property type="project" value="UniProtKB"/>
</dbReference>
<dbReference type="CDD" id="cd06265">
    <property type="entry name" value="RNase_A_canonical"/>
    <property type="match status" value="1"/>
</dbReference>
<dbReference type="FunFam" id="3.10.130.10:FF:000001">
    <property type="entry name" value="Ribonuclease pancreatic"/>
    <property type="match status" value="1"/>
</dbReference>
<dbReference type="Gene3D" id="3.10.130.10">
    <property type="entry name" value="Ribonuclease A-like domain"/>
    <property type="match status" value="1"/>
</dbReference>
<dbReference type="InterPro" id="IPR001427">
    <property type="entry name" value="RNaseA"/>
</dbReference>
<dbReference type="InterPro" id="IPR036816">
    <property type="entry name" value="RNaseA-like_dom_sf"/>
</dbReference>
<dbReference type="InterPro" id="IPR023411">
    <property type="entry name" value="RNaseA_AS"/>
</dbReference>
<dbReference type="InterPro" id="IPR023412">
    <property type="entry name" value="RNaseA_domain"/>
</dbReference>
<dbReference type="PANTHER" id="PTHR11437:SF60">
    <property type="entry name" value="ANGIOGENIN"/>
    <property type="match status" value="1"/>
</dbReference>
<dbReference type="PANTHER" id="PTHR11437">
    <property type="entry name" value="RIBONUCLEASE"/>
    <property type="match status" value="1"/>
</dbReference>
<dbReference type="Pfam" id="PF00074">
    <property type="entry name" value="RnaseA"/>
    <property type="match status" value="1"/>
</dbReference>
<dbReference type="PRINTS" id="PR00794">
    <property type="entry name" value="RIBONUCLEASE"/>
</dbReference>
<dbReference type="SMART" id="SM00092">
    <property type="entry name" value="RNAse_Pc"/>
    <property type="match status" value="1"/>
</dbReference>
<dbReference type="SUPFAM" id="SSF54076">
    <property type="entry name" value="RNase A-like"/>
    <property type="match status" value="1"/>
</dbReference>
<dbReference type="PROSITE" id="PS00127">
    <property type="entry name" value="RNASE_PANCREATIC"/>
    <property type="match status" value="1"/>
</dbReference>
<keyword id="KW-0037">Angiogenesis</keyword>
<keyword id="KW-0963">Cytoplasm</keyword>
<keyword id="KW-0217">Developmental protein</keyword>
<keyword id="KW-0221">Differentiation</keyword>
<keyword id="KW-1015">Disulfide bond</keyword>
<keyword id="KW-0238">DNA-binding</keyword>
<keyword id="KW-0255">Endonuclease</keyword>
<keyword id="KW-0378">Hydrolase</keyword>
<keyword id="KW-0540">Nuclease</keyword>
<keyword id="KW-0539">Nucleus</keyword>
<keyword id="KW-0652">Protein synthesis inhibitor</keyword>
<keyword id="KW-0873">Pyrrolidone carboxylic acid</keyword>
<keyword id="KW-1185">Reference proteome</keyword>
<keyword id="KW-0964">Secreted</keyword>
<keyword id="KW-0732">Signal</keyword>
<keyword id="KW-0346">Stress response</keyword>
<organism>
    <name type="scientific">Rhinopithecus roxellana</name>
    <name type="common">Golden snub-nosed monkey</name>
    <name type="synonym">Pygathrix roxellana</name>
    <dbReference type="NCBI Taxonomy" id="61622"/>
    <lineage>
        <taxon>Eukaryota</taxon>
        <taxon>Metazoa</taxon>
        <taxon>Chordata</taxon>
        <taxon>Craniata</taxon>
        <taxon>Vertebrata</taxon>
        <taxon>Euteleostomi</taxon>
        <taxon>Mammalia</taxon>
        <taxon>Eutheria</taxon>
        <taxon>Euarchontoglires</taxon>
        <taxon>Primates</taxon>
        <taxon>Haplorrhini</taxon>
        <taxon>Catarrhini</taxon>
        <taxon>Cercopithecidae</taxon>
        <taxon>Colobinae</taxon>
        <taxon>Rhinopithecus</taxon>
    </lineage>
</organism>
<sequence>MVMGLGLFLLVFMLGLGLTPPTLAQDNSRYRDFLTKHYDATPQGRNDRYCESMMRRRGLTSPCKDINTFIHGNSRHIKAICGDENGNPYGENLRISKSPFQVTTCNLRGGSSRPPCRYRATAGFRNIVVACENDLPVHLDQSIFRP</sequence>
<evidence type="ECO:0000250" key="1">
    <source>
        <dbReference type="UniProtKB" id="P03950"/>
    </source>
</evidence>
<evidence type="ECO:0000250" key="2">
    <source>
        <dbReference type="UniProtKB" id="P21570"/>
    </source>
</evidence>
<evidence type="ECO:0000305" key="3"/>
<protein>
    <recommendedName>
        <fullName>Angiogenin</fullName>
        <ecNumber evidence="1">3.1.27.-</ecNumber>
    </recommendedName>
    <alternativeName>
        <fullName>Ribonuclease 5</fullName>
        <shortName>RNase 5</shortName>
    </alternativeName>
</protein>